<name>DAPF_ECO5E</name>
<feature type="chain" id="PRO_1000099233" description="Diaminopimelate epimerase">
    <location>
        <begin position="1"/>
        <end position="274"/>
    </location>
</feature>
<feature type="active site" description="Proton donor" evidence="1">
    <location>
        <position position="73"/>
    </location>
</feature>
<feature type="active site" description="Proton acceptor" evidence="1">
    <location>
        <position position="217"/>
    </location>
</feature>
<feature type="binding site" evidence="1">
    <location>
        <position position="11"/>
    </location>
    <ligand>
        <name>substrate</name>
    </ligand>
</feature>
<feature type="binding site" evidence="1">
    <location>
        <position position="44"/>
    </location>
    <ligand>
        <name>substrate</name>
    </ligand>
</feature>
<feature type="binding site" evidence="1">
    <location>
        <position position="64"/>
    </location>
    <ligand>
        <name>substrate</name>
    </ligand>
</feature>
<feature type="binding site" evidence="1">
    <location>
        <begin position="74"/>
        <end position="75"/>
    </location>
    <ligand>
        <name>substrate</name>
    </ligand>
</feature>
<feature type="binding site" evidence="1">
    <location>
        <position position="157"/>
    </location>
    <ligand>
        <name>substrate</name>
    </ligand>
</feature>
<feature type="binding site" evidence="1">
    <location>
        <position position="190"/>
    </location>
    <ligand>
        <name>substrate</name>
    </ligand>
</feature>
<feature type="binding site" evidence="1">
    <location>
        <begin position="208"/>
        <end position="209"/>
    </location>
    <ligand>
        <name>substrate</name>
    </ligand>
</feature>
<feature type="binding site" evidence="1">
    <location>
        <begin position="218"/>
        <end position="219"/>
    </location>
    <ligand>
        <name>substrate</name>
    </ligand>
</feature>
<feature type="site" description="Could be important to modulate the pK values of the two catalytic cysteine residues" evidence="1">
    <location>
        <position position="159"/>
    </location>
</feature>
<feature type="site" description="Could be important to modulate the pK values of the two catalytic cysteine residues" evidence="1">
    <location>
        <position position="208"/>
    </location>
</feature>
<feature type="site" description="Important for dimerization" evidence="1">
    <location>
        <position position="268"/>
    </location>
</feature>
<gene>
    <name evidence="1" type="primary">dapF</name>
    <name type="ordered locus">ECH74115_5248</name>
</gene>
<protein>
    <recommendedName>
        <fullName evidence="1">Diaminopimelate epimerase</fullName>
        <shortName evidence="1">DAP epimerase</shortName>
        <ecNumber evidence="1">5.1.1.7</ecNumber>
    </recommendedName>
    <alternativeName>
        <fullName evidence="1">PLP-independent amino acid racemase</fullName>
    </alternativeName>
</protein>
<proteinExistence type="inferred from homology"/>
<sequence>MQFSKMHGLGNDFMVVDAVTQNVFFSPELIRRLADRHLGVGFDQLLVVEPPYDPELDFHYRIFNADGSEVAQCGNGARCFARFVRLKGLTNKRDIRVSTANGRMVLTVTDDDLVRVNMGEPNFEPSAVPFRANKAEKTYIMRAAEQTILCGVVSMGNPHCVIQVDDVDTAAVETLGPVLESHERFPERANIGFMQVVKREHIRLRVYERGAGETQACGSGACAAVAVGIQQGLLAEEVRVELPGGRLDIAWKGPGHPLYMTGPAVHVYDGFIHL</sequence>
<dbReference type="EC" id="5.1.1.7" evidence="1"/>
<dbReference type="EMBL" id="CP001164">
    <property type="protein sequence ID" value="ACI38211.1"/>
    <property type="molecule type" value="Genomic_DNA"/>
</dbReference>
<dbReference type="RefSeq" id="WP_001160654.1">
    <property type="nucleotide sequence ID" value="NC_011353.1"/>
</dbReference>
<dbReference type="SMR" id="B5YY56"/>
<dbReference type="GeneID" id="93778134"/>
<dbReference type="KEGG" id="ecf:ECH74115_5248"/>
<dbReference type="HOGENOM" id="CLU_053306_1_1_6"/>
<dbReference type="UniPathway" id="UPA00034">
    <property type="reaction ID" value="UER00025"/>
</dbReference>
<dbReference type="GO" id="GO:0005829">
    <property type="term" value="C:cytosol"/>
    <property type="evidence" value="ECO:0007669"/>
    <property type="project" value="TreeGrafter"/>
</dbReference>
<dbReference type="GO" id="GO:0008837">
    <property type="term" value="F:diaminopimelate epimerase activity"/>
    <property type="evidence" value="ECO:0007669"/>
    <property type="project" value="UniProtKB-UniRule"/>
</dbReference>
<dbReference type="GO" id="GO:0009089">
    <property type="term" value="P:lysine biosynthetic process via diaminopimelate"/>
    <property type="evidence" value="ECO:0007669"/>
    <property type="project" value="UniProtKB-UniRule"/>
</dbReference>
<dbReference type="FunFam" id="3.10.310.10:FF:000001">
    <property type="entry name" value="Diaminopimelate epimerase"/>
    <property type="match status" value="1"/>
</dbReference>
<dbReference type="FunFam" id="3.10.310.10:FF:000002">
    <property type="entry name" value="Diaminopimelate epimerase"/>
    <property type="match status" value="1"/>
</dbReference>
<dbReference type="Gene3D" id="3.10.310.10">
    <property type="entry name" value="Diaminopimelate Epimerase, Chain A, domain 1"/>
    <property type="match status" value="2"/>
</dbReference>
<dbReference type="HAMAP" id="MF_00197">
    <property type="entry name" value="DAP_epimerase"/>
    <property type="match status" value="1"/>
</dbReference>
<dbReference type="InterPro" id="IPR018510">
    <property type="entry name" value="DAP_epimerase_AS"/>
</dbReference>
<dbReference type="InterPro" id="IPR001653">
    <property type="entry name" value="DAP_epimerase_DapF"/>
</dbReference>
<dbReference type="NCBIfam" id="TIGR00652">
    <property type="entry name" value="DapF"/>
    <property type="match status" value="1"/>
</dbReference>
<dbReference type="PANTHER" id="PTHR31689:SF0">
    <property type="entry name" value="DIAMINOPIMELATE EPIMERASE"/>
    <property type="match status" value="1"/>
</dbReference>
<dbReference type="PANTHER" id="PTHR31689">
    <property type="entry name" value="DIAMINOPIMELATE EPIMERASE, CHLOROPLASTIC"/>
    <property type="match status" value="1"/>
</dbReference>
<dbReference type="Pfam" id="PF01678">
    <property type="entry name" value="DAP_epimerase"/>
    <property type="match status" value="2"/>
</dbReference>
<dbReference type="SUPFAM" id="SSF54506">
    <property type="entry name" value="Diaminopimelate epimerase-like"/>
    <property type="match status" value="1"/>
</dbReference>
<dbReference type="PROSITE" id="PS01326">
    <property type="entry name" value="DAP_EPIMERASE"/>
    <property type="match status" value="1"/>
</dbReference>
<evidence type="ECO:0000255" key="1">
    <source>
        <dbReference type="HAMAP-Rule" id="MF_00197"/>
    </source>
</evidence>
<reference key="1">
    <citation type="journal article" date="2011" name="Proc. Natl. Acad. Sci. U.S.A.">
        <title>Genomic anatomy of Escherichia coli O157:H7 outbreaks.</title>
        <authorList>
            <person name="Eppinger M."/>
            <person name="Mammel M.K."/>
            <person name="Leclerc J.E."/>
            <person name="Ravel J."/>
            <person name="Cebula T.A."/>
        </authorList>
    </citation>
    <scope>NUCLEOTIDE SEQUENCE [LARGE SCALE GENOMIC DNA]</scope>
    <source>
        <strain>EC4115 / EHEC</strain>
    </source>
</reference>
<keyword id="KW-0028">Amino-acid biosynthesis</keyword>
<keyword id="KW-0963">Cytoplasm</keyword>
<keyword id="KW-0413">Isomerase</keyword>
<keyword id="KW-0457">Lysine biosynthesis</keyword>
<comment type="function">
    <text evidence="1">Catalyzes the stereoinversion of LL-2,6-diaminopimelate (L,L-DAP) to meso-diaminopimelate (meso-DAP), a precursor of L-lysine and an essential component of the bacterial peptidoglycan.</text>
</comment>
<comment type="catalytic activity">
    <reaction evidence="1">
        <text>(2S,6S)-2,6-diaminopimelate = meso-2,6-diaminopimelate</text>
        <dbReference type="Rhea" id="RHEA:15393"/>
        <dbReference type="ChEBI" id="CHEBI:57609"/>
        <dbReference type="ChEBI" id="CHEBI:57791"/>
        <dbReference type="EC" id="5.1.1.7"/>
    </reaction>
</comment>
<comment type="pathway">
    <text evidence="1">Amino-acid biosynthesis; L-lysine biosynthesis via DAP pathway; DL-2,6-diaminopimelate from LL-2,6-diaminopimelate: step 1/1.</text>
</comment>
<comment type="subunit">
    <text evidence="1">Homodimer.</text>
</comment>
<comment type="subcellular location">
    <subcellularLocation>
        <location evidence="1">Cytoplasm</location>
    </subcellularLocation>
</comment>
<comment type="similarity">
    <text evidence="1">Belongs to the diaminopimelate epimerase family.</text>
</comment>
<organism>
    <name type="scientific">Escherichia coli O157:H7 (strain EC4115 / EHEC)</name>
    <dbReference type="NCBI Taxonomy" id="444450"/>
    <lineage>
        <taxon>Bacteria</taxon>
        <taxon>Pseudomonadati</taxon>
        <taxon>Pseudomonadota</taxon>
        <taxon>Gammaproteobacteria</taxon>
        <taxon>Enterobacterales</taxon>
        <taxon>Enterobacteriaceae</taxon>
        <taxon>Escherichia</taxon>
    </lineage>
</organism>
<accession>B5YY56</accession>